<organism>
    <name type="scientific">Escherichia coli O139:H28 (strain E24377A / ETEC)</name>
    <dbReference type="NCBI Taxonomy" id="331111"/>
    <lineage>
        <taxon>Bacteria</taxon>
        <taxon>Pseudomonadati</taxon>
        <taxon>Pseudomonadota</taxon>
        <taxon>Gammaproteobacteria</taxon>
        <taxon>Enterobacterales</taxon>
        <taxon>Enterobacteriaceae</taxon>
        <taxon>Escherichia</taxon>
    </lineage>
</organism>
<protein>
    <recommendedName>
        <fullName evidence="1">Glycogen debranching enzyme</fullName>
        <ecNumber evidence="1">3.2.1.196</ecNumber>
    </recommendedName>
    <alternativeName>
        <fullName evidence="1">Limit dextrin alpha-1,6-maltotetraose-hydrolase</fullName>
    </alternativeName>
</protein>
<proteinExistence type="inferred from homology"/>
<keyword id="KW-0119">Carbohydrate metabolism</keyword>
<keyword id="KW-0321">Glycogen metabolism</keyword>
<keyword id="KW-0326">Glycosidase</keyword>
<keyword id="KW-0378">Hydrolase</keyword>
<keyword id="KW-1185">Reference proteome</keyword>
<name>GLGX_ECO24</name>
<sequence length="657" mass="73603">MTQLAIGKPAPLGAHYDGQGVNFTLFSAHAERVELCVFDANGQEHRYDLPGHSGDIWHGYLPDARPGLRYGYRVHGPWQPAEGHRFNPAKLLIDPCARQIDGEFKDNPLLHAGHNEPDYRDNAAIAPKCVVVVDHYDWEDDAPPRTPWGSTIIYEAHVKGLTYLHPEIPVEIRGTYKALGHPVMINYLKQLGITALELLPVAQFASEPRLQRMGLSNYWGYNPVAMFALHPAYACSPETALDEFRDAIKALHKAGIEVILDIVLNHSAELDLDGPLFSLRGIDNRSYYWIREDGDYHNWTGCGNTLNLSHPAVVDYASACLRYWVETCHVDGFRFDLAAVMGRTPEFRQDAPLFTAIQNCPVLSQVKLIAEPWDIAPGGYQVGNFPPLFAEWNDHFRDAARRFWLHYDLPLGAFAGRFAASSDVFKRNGRLPSAAINLVTAHDGFTLRDCVCFNHKHNEANGEENRDGTNNNYSNNHGKEGLGGSLDLVERRRDSIHALLTTLLLSQGTPMLLAGDEHGHSQYGNNNAYCQDNQLTWLDWSQASSGLTAFTAALIHLRKRIPALVENRWWEEGDGNVRWLNRYAQPLSTDEWQNGPKQLQILLSDRFLIAINATLEVTEIVLPAGEWHAIPPFAGEDNPVITAVWQGPAHGLCVFQR</sequence>
<evidence type="ECO:0000255" key="1">
    <source>
        <dbReference type="HAMAP-Rule" id="MF_01248"/>
    </source>
</evidence>
<evidence type="ECO:0000256" key="2">
    <source>
        <dbReference type="SAM" id="MobiDB-lite"/>
    </source>
</evidence>
<reference key="1">
    <citation type="journal article" date="2008" name="J. Bacteriol.">
        <title>The pangenome structure of Escherichia coli: comparative genomic analysis of E. coli commensal and pathogenic isolates.</title>
        <authorList>
            <person name="Rasko D.A."/>
            <person name="Rosovitz M.J."/>
            <person name="Myers G.S.A."/>
            <person name="Mongodin E.F."/>
            <person name="Fricke W.F."/>
            <person name="Gajer P."/>
            <person name="Crabtree J."/>
            <person name="Sebaihia M."/>
            <person name="Thomson N.R."/>
            <person name="Chaudhuri R."/>
            <person name="Henderson I.R."/>
            <person name="Sperandio V."/>
            <person name="Ravel J."/>
        </authorList>
    </citation>
    <scope>NUCLEOTIDE SEQUENCE [LARGE SCALE GENOMIC DNA]</scope>
    <source>
        <strain>E24377A / ETEC</strain>
    </source>
</reference>
<gene>
    <name evidence="1" type="primary">glgX</name>
    <name type="ordered locus">EcE24377A_3910</name>
</gene>
<feature type="chain" id="PRO_1000067098" description="Glycogen debranching enzyme">
    <location>
        <begin position="1"/>
        <end position="657"/>
    </location>
</feature>
<feature type="region of interest" description="Disordered" evidence="2">
    <location>
        <begin position="458"/>
        <end position="479"/>
    </location>
</feature>
<feature type="compositionally biased region" description="Basic and acidic residues" evidence="2">
    <location>
        <begin position="458"/>
        <end position="467"/>
    </location>
</feature>
<feature type="active site" description="Nucleophile" evidence="1">
    <location>
        <position position="336"/>
    </location>
</feature>
<feature type="active site" description="Proton donor" evidence="1">
    <location>
        <position position="371"/>
    </location>
</feature>
<feature type="site" description="Transition state stabilizer" evidence="1">
    <location>
        <position position="443"/>
    </location>
</feature>
<dbReference type="EC" id="3.2.1.196" evidence="1"/>
<dbReference type="EMBL" id="CP000800">
    <property type="protein sequence ID" value="ABV16561.1"/>
    <property type="molecule type" value="Genomic_DNA"/>
</dbReference>
<dbReference type="RefSeq" id="WP_000192526.1">
    <property type="nucleotide sequence ID" value="NC_009801.1"/>
</dbReference>
<dbReference type="SMR" id="A7ZSW4"/>
<dbReference type="CAZy" id="CBM48">
    <property type="family name" value="Carbohydrate-Binding Module Family 48"/>
</dbReference>
<dbReference type="CAZy" id="GH13">
    <property type="family name" value="Glycoside Hydrolase Family 13"/>
</dbReference>
<dbReference type="KEGG" id="ecw:EcE24377A_3910"/>
<dbReference type="HOGENOM" id="CLU_011725_1_1_6"/>
<dbReference type="UniPathway" id="UPA00165"/>
<dbReference type="Proteomes" id="UP000001122">
    <property type="component" value="Chromosome"/>
</dbReference>
<dbReference type="GO" id="GO:0004133">
    <property type="term" value="F:glycogen debranching enzyme activity"/>
    <property type="evidence" value="ECO:0007669"/>
    <property type="project" value="UniProtKB-UniRule"/>
</dbReference>
<dbReference type="GO" id="GO:0004553">
    <property type="term" value="F:hydrolase activity, hydrolyzing O-glycosyl compounds"/>
    <property type="evidence" value="ECO:0007669"/>
    <property type="project" value="InterPro"/>
</dbReference>
<dbReference type="GO" id="GO:0005980">
    <property type="term" value="P:glycogen catabolic process"/>
    <property type="evidence" value="ECO:0007669"/>
    <property type="project" value="UniProtKB-UniRule"/>
</dbReference>
<dbReference type="CDD" id="cd11326">
    <property type="entry name" value="AmyAc_Glg_debranch"/>
    <property type="match status" value="1"/>
</dbReference>
<dbReference type="CDD" id="cd02856">
    <property type="entry name" value="E_set_GDE_Isoamylase_N"/>
    <property type="match status" value="1"/>
</dbReference>
<dbReference type="FunFam" id="2.60.40.10:FF:000468">
    <property type="entry name" value="Glycogen debranching enzyme"/>
    <property type="match status" value="1"/>
</dbReference>
<dbReference type="FunFam" id="3.20.20.80:FF:000031">
    <property type="entry name" value="Glycogen debranching enzyme"/>
    <property type="match status" value="1"/>
</dbReference>
<dbReference type="Gene3D" id="3.20.20.80">
    <property type="entry name" value="Glycosidases"/>
    <property type="match status" value="1"/>
</dbReference>
<dbReference type="Gene3D" id="2.60.40.1180">
    <property type="entry name" value="Golgi alpha-mannosidase II"/>
    <property type="match status" value="1"/>
</dbReference>
<dbReference type="Gene3D" id="2.60.40.10">
    <property type="entry name" value="Immunoglobulins"/>
    <property type="match status" value="1"/>
</dbReference>
<dbReference type="HAMAP" id="MF_01248">
    <property type="entry name" value="GlgX"/>
    <property type="match status" value="1"/>
</dbReference>
<dbReference type="InterPro" id="IPR040784">
    <property type="entry name" value="GlgX_C"/>
</dbReference>
<dbReference type="InterPro" id="IPR044505">
    <property type="entry name" value="GlgX_Isoamylase_N_E_set"/>
</dbReference>
<dbReference type="InterPro" id="IPR006047">
    <property type="entry name" value="Glyco_hydro_13_cat_dom"/>
</dbReference>
<dbReference type="InterPro" id="IPR004193">
    <property type="entry name" value="Glyco_hydro_13_N"/>
</dbReference>
<dbReference type="InterPro" id="IPR013780">
    <property type="entry name" value="Glyco_hydro_b"/>
</dbReference>
<dbReference type="InterPro" id="IPR022844">
    <property type="entry name" value="Glycogen_debranch_bac"/>
</dbReference>
<dbReference type="InterPro" id="IPR011837">
    <property type="entry name" value="Glycogen_debranch_GlgX"/>
</dbReference>
<dbReference type="InterPro" id="IPR017853">
    <property type="entry name" value="Glycoside_hydrolase_SF"/>
</dbReference>
<dbReference type="InterPro" id="IPR013783">
    <property type="entry name" value="Ig-like_fold"/>
</dbReference>
<dbReference type="InterPro" id="IPR014756">
    <property type="entry name" value="Ig_E-set"/>
</dbReference>
<dbReference type="NCBIfam" id="TIGR02100">
    <property type="entry name" value="glgX_debranch"/>
    <property type="match status" value="1"/>
</dbReference>
<dbReference type="NCBIfam" id="NF002983">
    <property type="entry name" value="PRK03705.1"/>
    <property type="match status" value="1"/>
</dbReference>
<dbReference type="PANTHER" id="PTHR43002">
    <property type="entry name" value="GLYCOGEN DEBRANCHING ENZYME"/>
    <property type="match status" value="1"/>
</dbReference>
<dbReference type="Pfam" id="PF00128">
    <property type="entry name" value="Alpha-amylase"/>
    <property type="match status" value="1"/>
</dbReference>
<dbReference type="Pfam" id="PF02922">
    <property type="entry name" value="CBM_48"/>
    <property type="match status" value="1"/>
</dbReference>
<dbReference type="Pfam" id="PF18390">
    <property type="entry name" value="GlgX_C"/>
    <property type="match status" value="1"/>
</dbReference>
<dbReference type="SMART" id="SM00642">
    <property type="entry name" value="Aamy"/>
    <property type="match status" value="1"/>
</dbReference>
<dbReference type="SUPFAM" id="SSF51445">
    <property type="entry name" value="(Trans)glycosidases"/>
    <property type="match status" value="1"/>
</dbReference>
<dbReference type="SUPFAM" id="SSF81296">
    <property type="entry name" value="E set domains"/>
    <property type="match status" value="1"/>
</dbReference>
<comment type="function">
    <text evidence="1">Removes maltotriose and maltotetraose chains that are attached by 1,6-alpha-linkage to the limit dextrin main chain, generating a debranched limit dextrin.</text>
</comment>
<comment type="catalytic activity">
    <reaction evidence="1">
        <text>Hydrolysis of (1-&gt;6)-alpha-D-glucosidic linkages to branches with degrees of polymerization of three or four glucose residues in limit dextrin.</text>
        <dbReference type="EC" id="3.2.1.196"/>
    </reaction>
</comment>
<comment type="pathway">
    <text evidence="1">Glycan degradation; glycogen degradation.</text>
</comment>
<comment type="similarity">
    <text evidence="1">Belongs to the glycosyl hydrolase 13 family.</text>
</comment>
<accession>A7ZSW4</accession>